<name>NTPPA_GEOUR</name>
<keyword id="KW-0963">Cytoplasm</keyword>
<keyword id="KW-0378">Hydrolase</keyword>
<keyword id="KW-0546">Nucleotide metabolism</keyword>
<keyword id="KW-1185">Reference proteome</keyword>
<reference key="1">
    <citation type="submission" date="2007-05" db="EMBL/GenBank/DDBJ databases">
        <title>Complete sequence of Geobacter uraniireducens Rf4.</title>
        <authorList>
            <consortium name="US DOE Joint Genome Institute"/>
            <person name="Copeland A."/>
            <person name="Lucas S."/>
            <person name="Lapidus A."/>
            <person name="Barry K."/>
            <person name="Detter J.C."/>
            <person name="Glavina del Rio T."/>
            <person name="Hammon N."/>
            <person name="Israni S."/>
            <person name="Dalin E."/>
            <person name="Tice H."/>
            <person name="Pitluck S."/>
            <person name="Chertkov O."/>
            <person name="Brettin T."/>
            <person name="Bruce D."/>
            <person name="Han C."/>
            <person name="Schmutz J."/>
            <person name="Larimer F."/>
            <person name="Land M."/>
            <person name="Hauser L."/>
            <person name="Kyrpides N."/>
            <person name="Mikhailova N."/>
            <person name="Shelobolina E."/>
            <person name="Aklujkar M."/>
            <person name="Lovley D."/>
            <person name="Richardson P."/>
        </authorList>
    </citation>
    <scope>NUCLEOTIDE SEQUENCE [LARGE SCALE GENOMIC DNA]</scope>
    <source>
        <strain>ATCC BAA-1134 / JCM 13001 / Rf4</strain>
    </source>
</reference>
<accession>A5G7S1</accession>
<gene>
    <name type="ordered locus">Gura_3686</name>
</gene>
<dbReference type="EC" id="3.6.1.9" evidence="1"/>
<dbReference type="EMBL" id="CP000698">
    <property type="protein sequence ID" value="ABQ27839.1"/>
    <property type="molecule type" value="Genomic_DNA"/>
</dbReference>
<dbReference type="SMR" id="A5G7S1"/>
<dbReference type="STRING" id="351605.Gura_3686"/>
<dbReference type="KEGG" id="gur:Gura_3686"/>
<dbReference type="HOGENOM" id="CLU_040416_0_0_7"/>
<dbReference type="OrthoDB" id="9807767at2"/>
<dbReference type="Proteomes" id="UP000006695">
    <property type="component" value="Chromosome"/>
</dbReference>
<dbReference type="GO" id="GO:0005737">
    <property type="term" value="C:cytoplasm"/>
    <property type="evidence" value="ECO:0007669"/>
    <property type="project" value="UniProtKB-SubCell"/>
</dbReference>
<dbReference type="GO" id="GO:0036218">
    <property type="term" value="F:dTTP diphosphatase activity"/>
    <property type="evidence" value="ECO:0007669"/>
    <property type="project" value="RHEA"/>
</dbReference>
<dbReference type="GO" id="GO:0036221">
    <property type="term" value="F:UTP diphosphatase activity"/>
    <property type="evidence" value="ECO:0007669"/>
    <property type="project" value="RHEA"/>
</dbReference>
<dbReference type="GO" id="GO:0009117">
    <property type="term" value="P:nucleotide metabolic process"/>
    <property type="evidence" value="ECO:0007669"/>
    <property type="project" value="UniProtKB-KW"/>
</dbReference>
<dbReference type="CDD" id="cd00555">
    <property type="entry name" value="Maf"/>
    <property type="match status" value="1"/>
</dbReference>
<dbReference type="FunFam" id="3.90.950.10:FF:000005">
    <property type="entry name" value="7-methyl-GTP pyrophosphatase"/>
    <property type="match status" value="1"/>
</dbReference>
<dbReference type="Gene3D" id="3.90.950.10">
    <property type="match status" value="1"/>
</dbReference>
<dbReference type="HAMAP" id="MF_00528">
    <property type="entry name" value="Maf"/>
    <property type="match status" value="1"/>
</dbReference>
<dbReference type="InterPro" id="IPR029001">
    <property type="entry name" value="ITPase-like_fam"/>
</dbReference>
<dbReference type="InterPro" id="IPR003697">
    <property type="entry name" value="Maf-like"/>
</dbReference>
<dbReference type="NCBIfam" id="TIGR00172">
    <property type="entry name" value="maf"/>
    <property type="match status" value="1"/>
</dbReference>
<dbReference type="NCBIfam" id="NF010948">
    <property type="entry name" value="PRK14368.1"/>
    <property type="match status" value="1"/>
</dbReference>
<dbReference type="PANTHER" id="PTHR43213">
    <property type="entry name" value="BIFUNCTIONAL DTTP/UTP PYROPHOSPHATASE/METHYLTRANSFERASE PROTEIN-RELATED"/>
    <property type="match status" value="1"/>
</dbReference>
<dbReference type="PANTHER" id="PTHR43213:SF5">
    <property type="entry name" value="BIFUNCTIONAL DTTP_UTP PYROPHOSPHATASE_METHYLTRANSFERASE PROTEIN-RELATED"/>
    <property type="match status" value="1"/>
</dbReference>
<dbReference type="Pfam" id="PF02545">
    <property type="entry name" value="Maf"/>
    <property type="match status" value="1"/>
</dbReference>
<dbReference type="PIRSF" id="PIRSF006305">
    <property type="entry name" value="Maf"/>
    <property type="match status" value="1"/>
</dbReference>
<dbReference type="SUPFAM" id="SSF52972">
    <property type="entry name" value="ITPase-like"/>
    <property type="match status" value="1"/>
</dbReference>
<sequence length="194" mass="20968">MMQAKSNIILASASPRRVELLSSAGIEFEVVAGDVDEGLLSGETPEDHVVRLARAKAEDVARKSGGRFYIGADTIVVCEGEIMGKPKDSADAERMLNKLSGIPHEVVTGFAVYDKERDGVITDAVRTRVYFKHLRDEEIRAYIATGCPFDKAGAYAIQGGAAYMVQKIEGSYSNVVGLPLCEVVDALRRMGAIE</sequence>
<evidence type="ECO:0000255" key="1">
    <source>
        <dbReference type="HAMAP-Rule" id="MF_00528"/>
    </source>
</evidence>
<feature type="chain" id="PRO_1000146291" description="dTTP/UTP pyrophosphatase">
    <location>
        <begin position="1"/>
        <end position="194"/>
    </location>
</feature>
<feature type="active site" description="Proton acceptor" evidence="1">
    <location>
        <position position="73"/>
    </location>
</feature>
<feature type="site" description="Important for substrate specificity" evidence="1">
    <location>
        <position position="16"/>
    </location>
</feature>
<feature type="site" description="Important for substrate specificity" evidence="1">
    <location>
        <position position="74"/>
    </location>
</feature>
<feature type="site" description="Important for substrate specificity" evidence="1">
    <location>
        <position position="158"/>
    </location>
</feature>
<comment type="function">
    <text evidence="1">Nucleoside triphosphate pyrophosphatase that hydrolyzes dTTP and UTP. May have a dual role in cell division arrest and in preventing the incorporation of modified nucleotides into cellular nucleic acids.</text>
</comment>
<comment type="catalytic activity">
    <reaction evidence="1">
        <text>dTTP + H2O = dTMP + diphosphate + H(+)</text>
        <dbReference type="Rhea" id="RHEA:28534"/>
        <dbReference type="ChEBI" id="CHEBI:15377"/>
        <dbReference type="ChEBI" id="CHEBI:15378"/>
        <dbReference type="ChEBI" id="CHEBI:33019"/>
        <dbReference type="ChEBI" id="CHEBI:37568"/>
        <dbReference type="ChEBI" id="CHEBI:63528"/>
        <dbReference type="EC" id="3.6.1.9"/>
    </reaction>
</comment>
<comment type="catalytic activity">
    <reaction evidence="1">
        <text>UTP + H2O = UMP + diphosphate + H(+)</text>
        <dbReference type="Rhea" id="RHEA:29395"/>
        <dbReference type="ChEBI" id="CHEBI:15377"/>
        <dbReference type="ChEBI" id="CHEBI:15378"/>
        <dbReference type="ChEBI" id="CHEBI:33019"/>
        <dbReference type="ChEBI" id="CHEBI:46398"/>
        <dbReference type="ChEBI" id="CHEBI:57865"/>
        <dbReference type="EC" id="3.6.1.9"/>
    </reaction>
</comment>
<comment type="cofactor">
    <cofactor evidence="1">
        <name>a divalent metal cation</name>
        <dbReference type="ChEBI" id="CHEBI:60240"/>
    </cofactor>
</comment>
<comment type="subcellular location">
    <subcellularLocation>
        <location evidence="1">Cytoplasm</location>
    </subcellularLocation>
</comment>
<comment type="similarity">
    <text evidence="1">Belongs to the Maf family. YhdE subfamily.</text>
</comment>
<proteinExistence type="inferred from homology"/>
<organism>
    <name type="scientific">Geotalea uraniireducens (strain Rf4)</name>
    <name type="common">Geobacter uraniireducens</name>
    <dbReference type="NCBI Taxonomy" id="351605"/>
    <lineage>
        <taxon>Bacteria</taxon>
        <taxon>Pseudomonadati</taxon>
        <taxon>Thermodesulfobacteriota</taxon>
        <taxon>Desulfuromonadia</taxon>
        <taxon>Geobacterales</taxon>
        <taxon>Geobacteraceae</taxon>
        <taxon>Geotalea</taxon>
    </lineage>
</organism>
<protein>
    <recommendedName>
        <fullName evidence="1">dTTP/UTP pyrophosphatase</fullName>
        <shortName evidence="1">dTTPase/UTPase</shortName>
        <ecNumber evidence="1">3.6.1.9</ecNumber>
    </recommendedName>
    <alternativeName>
        <fullName evidence="1">Nucleoside triphosphate pyrophosphatase</fullName>
    </alternativeName>
    <alternativeName>
        <fullName evidence="1">Nucleotide pyrophosphatase</fullName>
        <shortName evidence="1">Nucleotide PPase</shortName>
    </alternativeName>
</protein>